<organism>
    <name type="scientific">Escherichia coli (strain ATCC 8739 / DSM 1576 / NBRC 3972 / NCIMB 8545 / WDCM 00012 / Crooks)</name>
    <dbReference type="NCBI Taxonomy" id="481805"/>
    <lineage>
        <taxon>Bacteria</taxon>
        <taxon>Pseudomonadati</taxon>
        <taxon>Pseudomonadota</taxon>
        <taxon>Gammaproteobacteria</taxon>
        <taxon>Enterobacterales</taxon>
        <taxon>Enterobacteriaceae</taxon>
        <taxon>Escherichia</taxon>
    </lineage>
</organism>
<proteinExistence type="inferred from homology"/>
<evidence type="ECO:0000255" key="1">
    <source>
        <dbReference type="HAMAP-Rule" id="MF_01636"/>
    </source>
</evidence>
<evidence type="ECO:0000305" key="2"/>
<reference key="1">
    <citation type="submission" date="2008-02" db="EMBL/GenBank/DDBJ databases">
        <title>Complete sequence of Escherichia coli C str. ATCC 8739.</title>
        <authorList>
            <person name="Copeland A."/>
            <person name="Lucas S."/>
            <person name="Lapidus A."/>
            <person name="Glavina del Rio T."/>
            <person name="Dalin E."/>
            <person name="Tice H."/>
            <person name="Bruce D."/>
            <person name="Goodwin L."/>
            <person name="Pitluck S."/>
            <person name="Kiss H."/>
            <person name="Brettin T."/>
            <person name="Detter J.C."/>
            <person name="Han C."/>
            <person name="Kuske C.R."/>
            <person name="Schmutz J."/>
            <person name="Larimer F."/>
            <person name="Land M."/>
            <person name="Hauser L."/>
            <person name="Kyrpides N."/>
            <person name="Mikhailova N."/>
            <person name="Ingram L."/>
            <person name="Richardson P."/>
        </authorList>
    </citation>
    <scope>NUCLEOTIDE SEQUENCE [LARGE SCALE GENOMIC DNA]</scope>
    <source>
        <strain>ATCC 8739 / DSM 1576 / NBRC 3972 / NCIMB 8545 / WDCM 00012 / Crooks</strain>
    </source>
</reference>
<name>UBID_ECOLC</name>
<keyword id="KW-1003">Cell membrane</keyword>
<keyword id="KW-0210">Decarboxylase</keyword>
<keyword id="KW-0285">Flavoprotein</keyword>
<keyword id="KW-0288">FMN</keyword>
<keyword id="KW-0456">Lyase</keyword>
<keyword id="KW-0464">Manganese</keyword>
<keyword id="KW-0472">Membrane</keyword>
<keyword id="KW-0479">Metal-binding</keyword>
<keyword id="KW-0831">Ubiquinone biosynthesis</keyword>
<protein>
    <recommendedName>
        <fullName evidence="1">3-octaprenyl-4-hydroxybenzoate carboxy-lyase</fullName>
        <ecNumber evidence="1">4.1.1.98</ecNumber>
    </recommendedName>
    <alternativeName>
        <fullName evidence="1">Polyprenyl p-hydroxybenzoate decarboxylase</fullName>
    </alternativeName>
</protein>
<gene>
    <name evidence="1" type="primary">ubiD</name>
    <name type="ordered locus">EcolC_4167</name>
</gene>
<feature type="chain" id="PRO_0000335863" description="3-octaprenyl-4-hydroxybenzoate carboxy-lyase">
    <location>
        <begin position="1"/>
        <end position="494"/>
    </location>
</feature>
<feature type="active site" description="Proton donor" evidence="1">
    <location>
        <position position="287"/>
    </location>
</feature>
<feature type="binding site" evidence="1">
    <location>
        <position position="172"/>
    </location>
    <ligand>
        <name>Mn(2+)</name>
        <dbReference type="ChEBI" id="CHEBI:29035"/>
    </ligand>
</feature>
<feature type="binding site" evidence="1">
    <location>
        <begin position="175"/>
        <end position="177"/>
    </location>
    <ligand>
        <name>prenylated FMN</name>
        <dbReference type="ChEBI" id="CHEBI:87746"/>
    </ligand>
</feature>
<feature type="binding site" evidence="1">
    <location>
        <begin position="189"/>
        <end position="191"/>
    </location>
    <ligand>
        <name>prenylated FMN</name>
        <dbReference type="ChEBI" id="CHEBI:87746"/>
    </ligand>
</feature>
<feature type="binding site" evidence="1">
    <location>
        <begin position="194"/>
        <end position="195"/>
    </location>
    <ligand>
        <name>prenylated FMN</name>
        <dbReference type="ChEBI" id="CHEBI:87746"/>
    </ligand>
</feature>
<feature type="binding site" evidence="1">
    <location>
        <position position="238"/>
    </location>
    <ligand>
        <name>Mn(2+)</name>
        <dbReference type="ChEBI" id="CHEBI:29035"/>
    </ligand>
</feature>
<sequence>MKYNDLRDFLTLLEQQGELKRITLPVDPHLEITEIADRTLRAGGPALLFENPKGYSMPVLCNLFGTPKRVAMGMGQEDVSALREVGKLLAFLKEPEPPKGFRDLFDKLPQFKQVLNMPTKRLRGAPCQQKIVSGDDVDLNRIPIMTCWPEDAAPLITWGLTVTRGPHKERQNLGIYRQQLIGKNKLIMRWLSHRGGALDYQEWCAAHPGERFPVSVALGADPATILGAVTPVPDTLSEYAFAGLLRGTKTEVVKCISNDLEVPASAEIVLEGYIEQGETAPEGPYGDHTGYYNEVDSFPVFTVTHITQREDAIYHSTYTGRPPDEPAVLGVALNEVFVPILQKQFPEIVDFYLPPEGCSYRLAVVTIKKQYAGHAKRVMMGVWSFLRQFMYTKFVIVCDDDVNARDWNDVIWAITTRMDPARDTVLVENTPIDYLDFASPVSGLGSKMGLDATNKWPGETQREWGRPIKKDPDVVAHIDAIWDELAIFNNGKSA</sequence>
<dbReference type="EC" id="4.1.1.98" evidence="1"/>
<dbReference type="EMBL" id="CP000946">
    <property type="protein sequence ID" value="ACA79764.1"/>
    <property type="status" value="ALT_INIT"/>
    <property type="molecule type" value="Genomic_DNA"/>
</dbReference>
<dbReference type="SMR" id="B1IW64"/>
<dbReference type="KEGG" id="ecl:EcolC_4167"/>
<dbReference type="HOGENOM" id="CLU_023348_4_1_6"/>
<dbReference type="UniPathway" id="UPA00232"/>
<dbReference type="GO" id="GO:0005829">
    <property type="term" value="C:cytosol"/>
    <property type="evidence" value="ECO:0007669"/>
    <property type="project" value="TreeGrafter"/>
</dbReference>
<dbReference type="GO" id="GO:0005886">
    <property type="term" value="C:plasma membrane"/>
    <property type="evidence" value="ECO:0007669"/>
    <property type="project" value="UniProtKB-SubCell"/>
</dbReference>
<dbReference type="GO" id="GO:0008694">
    <property type="term" value="F:3-octaprenyl-4-hydroxybenzoate carboxy-lyase activity"/>
    <property type="evidence" value="ECO:0007669"/>
    <property type="project" value="UniProtKB-UniRule"/>
</dbReference>
<dbReference type="GO" id="GO:0046872">
    <property type="term" value="F:metal ion binding"/>
    <property type="evidence" value="ECO:0007669"/>
    <property type="project" value="UniProtKB-KW"/>
</dbReference>
<dbReference type="GO" id="GO:0006744">
    <property type="term" value="P:ubiquinone biosynthetic process"/>
    <property type="evidence" value="ECO:0007669"/>
    <property type="project" value="UniProtKB-UniRule"/>
</dbReference>
<dbReference type="FunFam" id="1.20.5.570:FF:000001">
    <property type="entry name" value="3-octaprenyl-4-hydroxybenzoate carboxy-lyase"/>
    <property type="match status" value="1"/>
</dbReference>
<dbReference type="FunFam" id="3.40.1670.10:FF:000001">
    <property type="entry name" value="3-octaprenyl-4-hydroxybenzoate carboxy-lyase"/>
    <property type="match status" value="1"/>
</dbReference>
<dbReference type="Gene3D" id="1.20.5.570">
    <property type="entry name" value="Single helix bin"/>
    <property type="match status" value="1"/>
</dbReference>
<dbReference type="Gene3D" id="3.40.1670.10">
    <property type="entry name" value="UbiD C-terminal domain-like"/>
    <property type="match status" value="1"/>
</dbReference>
<dbReference type="HAMAP" id="MF_01636">
    <property type="entry name" value="UbiD"/>
    <property type="match status" value="1"/>
</dbReference>
<dbReference type="InterPro" id="IPR002830">
    <property type="entry name" value="UbiD"/>
</dbReference>
<dbReference type="InterPro" id="IPR049381">
    <property type="entry name" value="UbiD-like_C"/>
</dbReference>
<dbReference type="InterPro" id="IPR049383">
    <property type="entry name" value="UbiD-like_N"/>
</dbReference>
<dbReference type="InterPro" id="IPR023677">
    <property type="entry name" value="UbiD_bacteria"/>
</dbReference>
<dbReference type="InterPro" id="IPR048304">
    <property type="entry name" value="UbiD_Rift_dom"/>
</dbReference>
<dbReference type="NCBIfam" id="NF008175">
    <property type="entry name" value="PRK10922.1"/>
    <property type="match status" value="1"/>
</dbReference>
<dbReference type="NCBIfam" id="TIGR00148">
    <property type="entry name" value="UbiD family decarboxylase"/>
    <property type="match status" value="1"/>
</dbReference>
<dbReference type="PANTHER" id="PTHR30108">
    <property type="entry name" value="3-OCTAPRENYL-4-HYDROXYBENZOATE CARBOXY-LYASE-RELATED"/>
    <property type="match status" value="1"/>
</dbReference>
<dbReference type="PANTHER" id="PTHR30108:SF17">
    <property type="entry name" value="FERULIC ACID DECARBOXYLASE 1"/>
    <property type="match status" value="1"/>
</dbReference>
<dbReference type="Pfam" id="PF01977">
    <property type="entry name" value="UbiD"/>
    <property type="match status" value="1"/>
</dbReference>
<dbReference type="Pfam" id="PF20696">
    <property type="entry name" value="UbiD_C"/>
    <property type="match status" value="1"/>
</dbReference>
<dbReference type="Pfam" id="PF20695">
    <property type="entry name" value="UbiD_N"/>
    <property type="match status" value="1"/>
</dbReference>
<dbReference type="SUPFAM" id="SSF50475">
    <property type="entry name" value="FMN-binding split barrel"/>
    <property type="match status" value="1"/>
</dbReference>
<dbReference type="SUPFAM" id="SSF143968">
    <property type="entry name" value="UbiD C-terminal domain-like"/>
    <property type="match status" value="1"/>
</dbReference>
<accession>B1IW64</accession>
<comment type="function">
    <text evidence="1">Catalyzes the decarboxylation of 3-octaprenyl-4-hydroxy benzoate to 2-octaprenylphenol, an intermediate step in ubiquinone biosynthesis.</text>
</comment>
<comment type="catalytic activity">
    <reaction evidence="1">
        <text>a 4-hydroxy-3-(all-trans-polyprenyl)benzoate + H(+) = a 2-(all-trans-polyprenyl)phenol + CO2</text>
        <dbReference type="Rhea" id="RHEA:41680"/>
        <dbReference type="Rhea" id="RHEA-COMP:9514"/>
        <dbReference type="Rhea" id="RHEA-COMP:9516"/>
        <dbReference type="ChEBI" id="CHEBI:1269"/>
        <dbReference type="ChEBI" id="CHEBI:15378"/>
        <dbReference type="ChEBI" id="CHEBI:16526"/>
        <dbReference type="ChEBI" id="CHEBI:78396"/>
        <dbReference type="EC" id="4.1.1.98"/>
    </reaction>
</comment>
<comment type="cofactor">
    <cofactor evidence="1">
        <name>prenylated FMN</name>
        <dbReference type="ChEBI" id="CHEBI:87746"/>
    </cofactor>
    <text evidence="1">Binds 1 prenylated FMN per subunit.</text>
</comment>
<comment type="cofactor">
    <cofactor evidence="1">
        <name>Mn(2+)</name>
        <dbReference type="ChEBI" id="CHEBI:29035"/>
    </cofactor>
</comment>
<comment type="pathway">
    <text evidence="1">Cofactor biosynthesis; ubiquinone biosynthesis.</text>
</comment>
<comment type="subunit">
    <text evidence="1">Homohexamer.</text>
</comment>
<comment type="subcellular location">
    <subcellularLocation>
        <location evidence="1">Cell membrane</location>
        <topology evidence="1">Peripheral membrane protein</topology>
    </subcellularLocation>
</comment>
<comment type="similarity">
    <text evidence="1">Belongs to the UbiD family.</text>
</comment>
<comment type="sequence caution" evidence="2">
    <conflict type="erroneous initiation">
        <sequence resource="EMBL-CDS" id="ACA79764"/>
    </conflict>
</comment>